<protein>
    <recommendedName>
        <fullName evidence="7">Calcium-independent mitochondrial carrier protein SCaMC-3L</fullName>
    </recommendedName>
    <alternativeName>
        <fullName evidence="7">Mitochondrial ATP-Mg/Pi carrier protein SLC25A41</fullName>
    </alternativeName>
    <alternativeName>
        <fullName>Small calcium-binding mitochondrial carrier protein 3-like</fullName>
        <shortName evidence="6">SCaMC-3-like</shortName>
        <shortName evidence="6">SCaMC-3L</shortName>
    </alternativeName>
    <alternativeName>
        <fullName>Solute carrier family 25 member 41</fullName>
    </alternativeName>
</protein>
<name>S2541_RAT</name>
<sequence length="312" mass="34557">MGVHLEVLDTGEQLMVPGDVLEEENKGTLWKFLLSGAMAGAVSRTGTAPLDRARVYMQVYSSKSNFRHLLSGLRSLVQEGGIRSLWRGNGINVLKIAPEYAIKFSVFEQSRNFFYGVHTSPSFQERVVAGSLAVAISQTLINPMEVLKTRLTLRFTGQYKGLLDCARQILERDGTRALYRGYLPNMLGIIPYACTDLAVYELLRCLWQKSGRDMKDPSGLVSLSSVTLSTTCGQMASYPLTLVRTRMQAQDTVEGSNPTMLGVFKRILNQQGWPGLYRGMTPTLLKVLPAGGISYLVYEAMKKTLGVQVLSR</sequence>
<comment type="function">
    <text evidence="2">Calcium-independent ATP-Mg/Pi exchanger that catalyzes the electroneutral exchange of Mg-ATP or free ADP against an hydrogenphosphate and participates in the net transport of adenine nucleotides across the mitochondria inner membrane.</text>
</comment>
<comment type="catalytic activity">
    <reaction evidence="2">
        <text>Mg(2+)(out) + phosphate(in) + ATP(out) = Mg(2+)(in) + phosphate(out) + ATP(in)</text>
        <dbReference type="Rhea" id="RHEA:65840"/>
        <dbReference type="ChEBI" id="CHEBI:18420"/>
        <dbReference type="ChEBI" id="CHEBI:30616"/>
        <dbReference type="ChEBI" id="CHEBI:43474"/>
    </reaction>
</comment>
<comment type="catalytic activity">
    <reaction evidence="2">
        <text>ADP(out) + phosphate(in) + H(+)(out) = ADP(in) + phosphate(out) + H(+)(in)</text>
        <dbReference type="Rhea" id="RHEA:65844"/>
        <dbReference type="ChEBI" id="CHEBI:15378"/>
        <dbReference type="ChEBI" id="CHEBI:43474"/>
        <dbReference type="ChEBI" id="CHEBI:456216"/>
    </reaction>
</comment>
<comment type="subcellular location">
    <subcellularLocation>
        <location evidence="2">Mitochondrion inner membrane</location>
        <topology evidence="1">Multi-pass membrane protein</topology>
    </subcellularLocation>
</comment>
<comment type="tissue specificity">
    <text evidence="5">Mainly expressed in testis and at lesser levels in brain.</text>
</comment>
<comment type="similarity">
    <text evidence="7">Belongs to the mitochondrial carrier (TC 2.A.29) family.</text>
</comment>
<gene>
    <name evidence="9" type="primary">Slc25a41</name>
    <name evidence="8" type="ORF">rCG_45007</name>
</gene>
<dbReference type="EMBL" id="FM165287">
    <property type="protein sequence ID" value="CAQ63320.1"/>
    <property type="molecule type" value="mRNA"/>
</dbReference>
<dbReference type="EMBL" id="AABR07066515">
    <property type="status" value="NOT_ANNOTATED_CDS"/>
    <property type="molecule type" value="Genomic_DNA"/>
</dbReference>
<dbReference type="EMBL" id="CH474092">
    <property type="protein sequence ID" value="EDL83587.1"/>
    <property type="molecule type" value="Genomic_DNA"/>
</dbReference>
<dbReference type="RefSeq" id="NP_001100344.1">
    <property type="nucleotide sequence ID" value="NM_001106874.1"/>
</dbReference>
<dbReference type="SMR" id="B8ZHC9"/>
<dbReference type="FunCoup" id="B8ZHC9">
    <property type="interactions" value="6"/>
</dbReference>
<dbReference type="STRING" id="10116.ENSRNOP00000064251"/>
<dbReference type="PhosphoSitePlus" id="B8ZHC9"/>
<dbReference type="PaxDb" id="10116-ENSRNOP00000064251"/>
<dbReference type="PeptideAtlas" id="B8ZHC9"/>
<dbReference type="Ensembl" id="ENSRNOT00000074117.3">
    <property type="protein sequence ID" value="ENSRNOP00000064251.1"/>
    <property type="gene ID" value="ENSRNOG00000048853.3"/>
</dbReference>
<dbReference type="GeneID" id="301114"/>
<dbReference type="KEGG" id="rno:301114"/>
<dbReference type="AGR" id="RGD:1588585"/>
<dbReference type="CTD" id="284427"/>
<dbReference type="RGD" id="1588585">
    <property type="gene designation" value="Slc25a41"/>
</dbReference>
<dbReference type="eggNOG" id="KOG0036">
    <property type="taxonomic scope" value="Eukaryota"/>
</dbReference>
<dbReference type="GeneTree" id="ENSGT00940000162419"/>
<dbReference type="HOGENOM" id="CLU_015166_10_2_1"/>
<dbReference type="InParanoid" id="B8ZHC9"/>
<dbReference type="PhylomeDB" id="B8ZHC9"/>
<dbReference type="PRO" id="PR:B8ZHC9"/>
<dbReference type="Proteomes" id="UP000002494">
    <property type="component" value="Chromosome 9"/>
</dbReference>
<dbReference type="Proteomes" id="UP000234681">
    <property type="component" value="Chromosome 9"/>
</dbReference>
<dbReference type="Bgee" id="ENSRNOG00000048853">
    <property type="expression patterns" value="Expressed in testis"/>
</dbReference>
<dbReference type="GO" id="GO:0005743">
    <property type="term" value="C:mitochondrial inner membrane"/>
    <property type="evidence" value="ECO:0007669"/>
    <property type="project" value="UniProtKB-SubCell"/>
</dbReference>
<dbReference type="GO" id="GO:0005739">
    <property type="term" value="C:mitochondrion"/>
    <property type="evidence" value="ECO:0000250"/>
    <property type="project" value="UniProtKB"/>
</dbReference>
<dbReference type="GO" id="GO:0015217">
    <property type="term" value="F:ADP transmembrane transporter activity"/>
    <property type="evidence" value="ECO:0000250"/>
    <property type="project" value="UniProtKB"/>
</dbReference>
<dbReference type="GO" id="GO:0005347">
    <property type="term" value="F:ATP transmembrane transporter activity"/>
    <property type="evidence" value="ECO:0000250"/>
    <property type="project" value="UniProtKB"/>
</dbReference>
<dbReference type="GO" id="GO:0015866">
    <property type="term" value="P:ADP transport"/>
    <property type="evidence" value="ECO:0000250"/>
    <property type="project" value="UniProtKB"/>
</dbReference>
<dbReference type="GO" id="GO:0015867">
    <property type="term" value="P:ATP transport"/>
    <property type="evidence" value="ECO:0000250"/>
    <property type="project" value="UniProtKB"/>
</dbReference>
<dbReference type="GO" id="GO:0140021">
    <property type="term" value="P:mitochondrial ADP transmembrane transport"/>
    <property type="evidence" value="ECO:0000250"/>
    <property type="project" value="UniProtKB"/>
</dbReference>
<dbReference type="GO" id="GO:1990544">
    <property type="term" value="P:mitochondrial ATP transmembrane transport"/>
    <property type="evidence" value="ECO:0000250"/>
    <property type="project" value="UniProtKB"/>
</dbReference>
<dbReference type="FunFam" id="1.50.40.10:FF:000003">
    <property type="entry name" value="Putative calcium-binding mitochondrial carrier protein scamc-2"/>
    <property type="match status" value="1"/>
</dbReference>
<dbReference type="Gene3D" id="1.50.40.10">
    <property type="entry name" value="Mitochondrial carrier domain"/>
    <property type="match status" value="1"/>
</dbReference>
<dbReference type="InterPro" id="IPR002067">
    <property type="entry name" value="Mit_carrier"/>
</dbReference>
<dbReference type="InterPro" id="IPR018108">
    <property type="entry name" value="Mitochondrial_sb/sol_carrier"/>
</dbReference>
<dbReference type="InterPro" id="IPR023395">
    <property type="entry name" value="Mt_carrier_dom_sf"/>
</dbReference>
<dbReference type="PANTHER" id="PTHR24089">
    <property type="entry name" value="SOLUTE CARRIER FAMILY 25"/>
    <property type="match status" value="1"/>
</dbReference>
<dbReference type="Pfam" id="PF00153">
    <property type="entry name" value="Mito_carr"/>
    <property type="match status" value="3"/>
</dbReference>
<dbReference type="PRINTS" id="PR00926">
    <property type="entry name" value="MITOCARRIER"/>
</dbReference>
<dbReference type="SUPFAM" id="SSF103506">
    <property type="entry name" value="Mitochondrial carrier"/>
    <property type="match status" value="1"/>
</dbReference>
<dbReference type="PROSITE" id="PS50920">
    <property type="entry name" value="SOLCAR"/>
    <property type="match status" value="3"/>
</dbReference>
<accession>B8ZHC9</accession>
<feature type="chain" id="PRO_0000451985" description="Calcium-independent mitochondrial carrier protein SCaMC-3L">
    <location>
        <begin position="1"/>
        <end position="312"/>
    </location>
</feature>
<feature type="transmembrane region" description="Helical; Name=1" evidence="3">
    <location>
        <begin position="33"/>
        <end position="50"/>
    </location>
</feature>
<feature type="transmembrane region" description="Helical; Name=2" evidence="3">
    <location>
        <begin position="88"/>
        <end position="107"/>
    </location>
</feature>
<feature type="transmembrane region" description="Helical; Name=3" evidence="3">
    <location>
        <begin position="131"/>
        <end position="144"/>
    </location>
</feature>
<feature type="transmembrane region" description="Helical; Name=4" evidence="3">
    <location>
        <begin position="182"/>
        <end position="200"/>
    </location>
</feature>
<feature type="transmembrane region" description="Helical; Name=5" evidence="3">
    <location>
        <begin position="219"/>
        <end position="243"/>
    </location>
</feature>
<feature type="transmembrane region" description="Helical; Name=6" evidence="3">
    <location>
        <begin position="279"/>
        <end position="298"/>
    </location>
</feature>
<feature type="repeat" description="Solcar 1" evidence="4">
    <location>
        <begin position="27"/>
        <end position="113"/>
    </location>
</feature>
<feature type="repeat" description="Solcar 2" evidence="4">
    <location>
        <begin position="121"/>
        <end position="206"/>
    </location>
</feature>
<feature type="repeat" description="Solcar 3" evidence="4">
    <location>
        <begin position="217"/>
        <end position="304"/>
    </location>
</feature>
<organism>
    <name type="scientific">Rattus norvegicus</name>
    <name type="common">Rat</name>
    <dbReference type="NCBI Taxonomy" id="10116"/>
    <lineage>
        <taxon>Eukaryota</taxon>
        <taxon>Metazoa</taxon>
        <taxon>Chordata</taxon>
        <taxon>Craniata</taxon>
        <taxon>Vertebrata</taxon>
        <taxon>Euteleostomi</taxon>
        <taxon>Mammalia</taxon>
        <taxon>Eutheria</taxon>
        <taxon>Euarchontoglires</taxon>
        <taxon>Glires</taxon>
        <taxon>Rodentia</taxon>
        <taxon>Myomorpha</taxon>
        <taxon>Muroidea</taxon>
        <taxon>Muridae</taxon>
        <taxon>Murinae</taxon>
        <taxon>Rattus</taxon>
    </lineage>
</organism>
<proteinExistence type="evidence at transcript level"/>
<evidence type="ECO:0000250" key="1">
    <source>
        <dbReference type="UniProtKB" id="O94502"/>
    </source>
</evidence>
<evidence type="ECO:0000250" key="2">
    <source>
        <dbReference type="UniProtKB" id="Q8BVN7"/>
    </source>
</evidence>
<evidence type="ECO:0000255" key="3"/>
<evidence type="ECO:0000255" key="4">
    <source>
        <dbReference type="PROSITE-ProRule" id="PRU00282"/>
    </source>
</evidence>
<evidence type="ECO:0000269" key="5">
    <source>
    </source>
</evidence>
<evidence type="ECO:0000303" key="6">
    <source>
    </source>
</evidence>
<evidence type="ECO:0000305" key="7"/>
<evidence type="ECO:0000312" key="8">
    <source>
        <dbReference type="EMBL" id="EDL83587.1"/>
    </source>
</evidence>
<evidence type="ECO:0000312" key="9">
    <source>
        <dbReference type="RGD" id="1588585"/>
    </source>
</evidence>
<keyword id="KW-0472">Membrane</keyword>
<keyword id="KW-0496">Mitochondrion</keyword>
<keyword id="KW-0999">Mitochondrion inner membrane</keyword>
<keyword id="KW-1185">Reference proteome</keyword>
<keyword id="KW-0677">Repeat</keyword>
<keyword id="KW-0812">Transmembrane</keyword>
<keyword id="KW-1133">Transmembrane helix</keyword>
<keyword id="KW-0813">Transport</keyword>
<reference key="1">
    <citation type="journal article" date="2009" name="Biochem. J.">
        <title>Characterization of SCaMC-3-like/slc25a41, a novel calcium-independent mitochondrial ATP-Mg/Pi carrier.</title>
        <authorList>
            <person name="Traba J."/>
            <person name="Satrustegui J."/>
            <person name="del Arco A."/>
        </authorList>
    </citation>
    <scope>NUCLEOTIDE SEQUENCE [MRNA]</scope>
    <scope>TISSUE SPECIFICITY</scope>
    <source>
        <strain>Wistar</strain>
        <tissue>Testis</tissue>
    </source>
</reference>
<reference key="2">
    <citation type="journal article" date="2004" name="Nature">
        <title>Genome sequence of the Brown Norway rat yields insights into mammalian evolution.</title>
        <authorList>
            <person name="Gibbs R.A."/>
            <person name="Weinstock G.M."/>
            <person name="Metzker M.L."/>
            <person name="Muzny D.M."/>
            <person name="Sodergren E.J."/>
            <person name="Scherer S."/>
            <person name="Scott G."/>
            <person name="Steffen D."/>
            <person name="Worley K.C."/>
            <person name="Burch P.E."/>
            <person name="Okwuonu G."/>
            <person name="Hines S."/>
            <person name="Lewis L."/>
            <person name="Deramo C."/>
            <person name="Delgado O."/>
            <person name="Dugan-Rocha S."/>
            <person name="Miner G."/>
            <person name="Morgan M."/>
            <person name="Hawes A."/>
            <person name="Gill R."/>
            <person name="Holt R.A."/>
            <person name="Adams M.D."/>
            <person name="Amanatides P.G."/>
            <person name="Baden-Tillson H."/>
            <person name="Barnstead M."/>
            <person name="Chin S."/>
            <person name="Evans C.A."/>
            <person name="Ferriera S."/>
            <person name="Fosler C."/>
            <person name="Glodek A."/>
            <person name="Gu Z."/>
            <person name="Jennings D."/>
            <person name="Kraft C.L."/>
            <person name="Nguyen T."/>
            <person name="Pfannkoch C.M."/>
            <person name="Sitter C."/>
            <person name="Sutton G.G."/>
            <person name="Venter J.C."/>
            <person name="Woodage T."/>
            <person name="Smith D."/>
            <person name="Lee H.-M."/>
            <person name="Gustafson E."/>
            <person name="Cahill P."/>
            <person name="Kana A."/>
            <person name="Doucette-Stamm L."/>
            <person name="Weinstock K."/>
            <person name="Fechtel K."/>
            <person name="Weiss R.B."/>
            <person name="Dunn D.M."/>
            <person name="Green E.D."/>
            <person name="Blakesley R.W."/>
            <person name="Bouffard G.G."/>
            <person name="De Jong P.J."/>
            <person name="Osoegawa K."/>
            <person name="Zhu B."/>
            <person name="Marra M."/>
            <person name="Schein J."/>
            <person name="Bosdet I."/>
            <person name="Fjell C."/>
            <person name="Jones S."/>
            <person name="Krzywinski M."/>
            <person name="Mathewson C."/>
            <person name="Siddiqui A."/>
            <person name="Wye N."/>
            <person name="McPherson J."/>
            <person name="Zhao S."/>
            <person name="Fraser C.M."/>
            <person name="Shetty J."/>
            <person name="Shatsman S."/>
            <person name="Geer K."/>
            <person name="Chen Y."/>
            <person name="Abramzon S."/>
            <person name="Nierman W.C."/>
            <person name="Havlak P.H."/>
            <person name="Chen R."/>
            <person name="Durbin K.J."/>
            <person name="Egan A."/>
            <person name="Ren Y."/>
            <person name="Song X.-Z."/>
            <person name="Li B."/>
            <person name="Liu Y."/>
            <person name="Qin X."/>
            <person name="Cawley S."/>
            <person name="Cooney A.J."/>
            <person name="D'Souza L.M."/>
            <person name="Martin K."/>
            <person name="Wu J.Q."/>
            <person name="Gonzalez-Garay M.L."/>
            <person name="Jackson A.R."/>
            <person name="Kalafus K.J."/>
            <person name="McLeod M.P."/>
            <person name="Milosavljevic A."/>
            <person name="Virk D."/>
            <person name="Volkov A."/>
            <person name="Wheeler D.A."/>
            <person name="Zhang Z."/>
            <person name="Bailey J.A."/>
            <person name="Eichler E.E."/>
            <person name="Tuzun E."/>
            <person name="Birney E."/>
            <person name="Mongin E."/>
            <person name="Ureta-Vidal A."/>
            <person name="Woodwark C."/>
            <person name="Zdobnov E."/>
            <person name="Bork P."/>
            <person name="Suyama M."/>
            <person name="Torrents D."/>
            <person name="Alexandersson M."/>
            <person name="Trask B.J."/>
            <person name="Young J.M."/>
            <person name="Huang H."/>
            <person name="Wang H."/>
            <person name="Xing H."/>
            <person name="Daniels S."/>
            <person name="Gietzen D."/>
            <person name="Schmidt J."/>
            <person name="Stevens K."/>
            <person name="Vitt U."/>
            <person name="Wingrove J."/>
            <person name="Camara F."/>
            <person name="Mar Alba M."/>
            <person name="Abril J.F."/>
            <person name="Guigo R."/>
            <person name="Smit A."/>
            <person name="Dubchak I."/>
            <person name="Rubin E.M."/>
            <person name="Couronne O."/>
            <person name="Poliakov A."/>
            <person name="Huebner N."/>
            <person name="Ganten D."/>
            <person name="Goesele C."/>
            <person name="Hummel O."/>
            <person name="Kreitler T."/>
            <person name="Lee Y.-A."/>
            <person name="Monti J."/>
            <person name="Schulz H."/>
            <person name="Zimdahl H."/>
            <person name="Himmelbauer H."/>
            <person name="Lehrach H."/>
            <person name="Jacob H.J."/>
            <person name="Bromberg S."/>
            <person name="Gullings-Handley J."/>
            <person name="Jensen-Seaman M.I."/>
            <person name="Kwitek A.E."/>
            <person name="Lazar J."/>
            <person name="Pasko D."/>
            <person name="Tonellato P.J."/>
            <person name="Twigger S."/>
            <person name="Ponting C.P."/>
            <person name="Duarte J.M."/>
            <person name="Rice S."/>
            <person name="Goodstadt L."/>
            <person name="Beatson S.A."/>
            <person name="Emes R.D."/>
            <person name="Winter E.E."/>
            <person name="Webber C."/>
            <person name="Brandt P."/>
            <person name="Nyakatura G."/>
            <person name="Adetobi M."/>
            <person name="Chiaromonte F."/>
            <person name="Elnitski L."/>
            <person name="Eswara P."/>
            <person name="Hardison R.C."/>
            <person name="Hou M."/>
            <person name="Kolbe D."/>
            <person name="Makova K."/>
            <person name="Miller W."/>
            <person name="Nekrutenko A."/>
            <person name="Riemer C."/>
            <person name="Schwartz S."/>
            <person name="Taylor J."/>
            <person name="Yang S."/>
            <person name="Zhang Y."/>
            <person name="Lindpaintner K."/>
            <person name="Andrews T.D."/>
            <person name="Caccamo M."/>
            <person name="Clamp M."/>
            <person name="Clarke L."/>
            <person name="Curwen V."/>
            <person name="Durbin R.M."/>
            <person name="Eyras E."/>
            <person name="Searle S.M."/>
            <person name="Cooper G.M."/>
            <person name="Batzoglou S."/>
            <person name="Brudno M."/>
            <person name="Sidow A."/>
            <person name="Stone E.A."/>
            <person name="Payseur B.A."/>
            <person name="Bourque G."/>
            <person name="Lopez-Otin C."/>
            <person name="Puente X.S."/>
            <person name="Chakrabarti K."/>
            <person name="Chatterji S."/>
            <person name="Dewey C."/>
            <person name="Pachter L."/>
            <person name="Bray N."/>
            <person name="Yap V.B."/>
            <person name="Caspi A."/>
            <person name="Tesler G."/>
            <person name="Pevzner P.A."/>
            <person name="Haussler D."/>
            <person name="Roskin K.M."/>
            <person name="Baertsch R."/>
            <person name="Clawson H."/>
            <person name="Furey T.S."/>
            <person name="Hinrichs A.S."/>
            <person name="Karolchik D."/>
            <person name="Kent W.J."/>
            <person name="Rosenbloom K.R."/>
            <person name="Trumbower H."/>
            <person name="Weirauch M."/>
            <person name="Cooper D.N."/>
            <person name="Stenson P.D."/>
            <person name="Ma B."/>
            <person name="Brent M."/>
            <person name="Arumugam M."/>
            <person name="Shteynberg D."/>
            <person name="Copley R.R."/>
            <person name="Taylor M.S."/>
            <person name="Riethman H."/>
            <person name="Mudunuri U."/>
            <person name="Peterson J."/>
            <person name="Guyer M."/>
            <person name="Felsenfeld A."/>
            <person name="Old S."/>
            <person name="Mockrin S."/>
            <person name="Collins F.S."/>
        </authorList>
    </citation>
    <scope>NUCLEOTIDE SEQUENCE [LARGE SCALE GENOMIC DNA]</scope>
    <source>
        <strain>Brown Norway</strain>
    </source>
</reference>
<reference key="3">
    <citation type="submission" date="2005-07" db="EMBL/GenBank/DDBJ databases">
        <authorList>
            <person name="Mural R.J."/>
            <person name="Adams M.D."/>
            <person name="Myers E.W."/>
            <person name="Smith H.O."/>
            <person name="Venter J.C."/>
        </authorList>
    </citation>
    <scope>NUCLEOTIDE SEQUENCE [LARGE SCALE GENOMIC DNA]</scope>
    <source>
        <strain>Brown Norway</strain>
    </source>
</reference>